<feature type="chain" id="PRO_0000435795" description="Protein-lysine N-methyltransferase">
    <location>
        <begin position="1"/>
        <end position="161"/>
    </location>
</feature>
<feature type="short sequence motif" description="DxGxGxG SAM-binding motif" evidence="4">
    <location>
        <begin position="34"/>
        <end position="40"/>
    </location>
</feature>
<feature type="mutagenesis site" description="Complete loss of catalytic activity." evidence="1">
    <location>
        <begin position="1"/>
        <end position="12"/>
    </location>
</feature>
<feature type="mutagenesis site" description="70% of wild-type catalytic activity." evidence="1">
    <location>
        <begin position="1"/>
        <end position="6"/>
    </location>
</feature>
<feature type="mutagenesis site" description="11% of wild-type catalytic activity." evidence="1">
    <original>Y</original>
    <variation>A</variation>
    <location>
        <position position="9"/>
    </location>
</feature>
<feature type="mutagenesis site" description="23% of wild-type catalytic activity." evidence="1">
    <original>P</original>
    <variation>A</variation>
    <location>
        <position position="11"/>
    </location>
</feature>
<feature type="mutagenesis site" description="4% of wild-type catalytic activity." evidence="1">
    <original>T</original>
    <variation>A</variation>
    <location>
        <position position="12"/>
    </location>
</feature>
<feature type="mutagenesis site" description="Almost complete loss of catalytic activity." evidence="1">
    <original>D</original>
    <variation>K</variation>
    <location>
        <position position="34"/>
    </location>
</feature>
<feature type="mutagenesis site" description="Almost complete loss of catalytic activity." evidence="1">
    <original>G</original>
    <variation>R</variation>
    <location>
        <position position="36"/>
    </location>
</feature>
<feature type="strand" evidence="6">
    <location>
        <begin position="5"/>
        <end position="7"/>
    </location>
</feature>
<feature type="helix" evidence="6">
    <location>
        <begin position="14"/>
        <end position="24"/>
    </location>
</feature>
<feature type="strand" evidence="6">
    <location>
        <begin position="32"/>
        <end position="35"/>
    </location>
</feature>
<feature type="strand" evidence="6">
    <location>
        <begin position="38"/>
        <end position="40"/>
    </location>
</feature>
<feature type="helix" evidence="6">
    <location>
        <begin position="41"/>
        <end position="49"/>
    </location>
</feature>
<feature type="strand" evidence="6">
    <location>
        <begin position="55"/>
        <end position="58"/>
    </location>
</feature>
<feature type="helix" evidence="6">
    <location>
        <begin position="63"/>
        <end position="74"/>
    </location>
</feature>
<feature type="turn" evidence="6">
    <location>
        <begin position="78"/>
        <end position="80"/>
    </location>
</feature>
<feature type="strand" evidence="6">
    <location>
        <begin position="81"/>
        <end position="84"/>
    </location>
</feature>
<feature type="turn" evidence="6">
    <location>
        <begin position="88"/>
        <end position="90"/>
    </location>
</feature>
<feature type="strand" evidence="6">
    <location>
        <begin position="97"/>
        <end position="100"/>
    </location>
</feature>
<feature type="helix" evidence="6">
    <location>
        <begin position="112"/>
        <end position="118"/>
    </location>
</feature>
<feature type="strand" evidence="6">
    <location>
        <begin position="124"/>
        <end position="130"/>
    </location>
</feature>
<feature type="strand" evidence="6">
    <location>
        <begin position="138"/>
        <end position="145"/>
    </location>
</feature>
<feature type="strand" evidence="6">
    <location>
        <begin position="148"/>
        <end position="156"/>
    </location>
</feature>
<dbReference type="EC" id="2.1.1.-" evidence="1"/>
<dbReference type="EMBL" id="CP002425">
    <property type="protein sequence ID" value="ADX85515.1"/>
    <property type="molecule type" value="Genomic_DNA"/>
</dbReference>
<dbReference type="RefSeq" id="WP_012711567.1">
    <property type="nucleotide sequence ID" value="NC_017276.1"/>
</dbReference>
<dbReference type="PDB" id="5JWJ">
    <property type="method" value="NMR"/>
    <property type="chains" value="A=1-161"/>
</dbReference>
<dbReference type="PDBsum" id="5JWJ"/>
<dbReference type="BMRB" id="F0NBH8"/>
<dbReference type="SMR" id="F0NBH8"/>
<dbReference type="STRING" id="930945.SiRe_1449"/>
<dbReference type="KEGG" id="sir:SiRe_1449"/>
<dbReference type="eggNOG" id="arCOG01631">
    <property type="taxonomic scope" value="Archaea"/>
</dbReference>
<dbReference type="HOGENOM" id="CLU_068443_2_1_2"/>
<dbReference type="BRENDA" id="2.1.1.B112">
    <property type="organism ID" value="8240"/>
</dbReference>
<dbReference type="Proteomes" id="UP000002664">
    <property type="component" value="Chromosome"/>
</dbReference>
<dbReference type="GO" id="GO:0016279">
    <property type="term" value="F:protein-lysine N-methyltransferase activity"/>
    <property type="evidence" value="ECO:0000314"/>
    <property type="project" value="CACAO"/>
</dbReference>
<dbReference type="GO" id="GO:0032259">
    <property type="term" value="P:methylation"/>
    <property type="evidence" value="ECO:0007669"/>
    <property type="project" value="UniProtKB-KW"/>
</dbReference>
<dbReference type="CDD" id="cd02440">
    <property type="entry name" value="AdoMet_MTases"/>
    <property type="match status" value="1"/>
</dbReference>
<dbReference type="FunFam" id="3.40.50.150:FF:000377">
    <property type="entry name" value="50S ribosomal protein L11 methyltransferase"/>
    <property type="match status" value="1"/>
</dbReference>
<dbReference type="Gene3D" id="3.40.50.150">
    <property type="entry name" value="Vaccinia Virus protein VP39"/>
    <property type="match status" value="1"/>
</dbReference>
<dbReference type="InterPro" id="IPR026170">
    <property type="entry name" value="FAM173A/B"/>
</dbReference>
<dbReference type="InterPro" id="IPR053600">
    <property type="entry name" value="Lysine_N-MTase"/>
</dbReference>
<dbReference type="InterPro" id="IPR025714">
    <property type="entry name" value="Methyltranfer_dom"/>
</dbReference>
<dbReference type="InterPro" id="IPR029063">
    <property type="entry name" value="SAM-dependent_MTases_sf"/>
</dbReference>
<dbReference type="NCBIfam" id="NF041081">
    <property type="entry name" value="prot_lys_mtase_Arch"/>
    <property type="match status" value="1"/>
</dbReference>
<dbReference type="PANTHER" id="PTHR13610">
    <property type="entry name" value="METHYLTRANSFERASE DOMAIN-CONTAINING PROTEIN"/>
    <property type="match status" value="1"/>
</dbReference>
<dbReference type="PANTHER" id="PTHR13610:SF11">
    <property type="entry name" value="METHYLTRANSFERASE DOMAIN-CONTAINING PROTEIN"/>
    <property type="match status" value="1"/>
</dbReference>
<dbReference type="Pfam" id="PF13847">
    <property type="entry name" value="Methyltransf_31"/>
    <property type="match status" value="1"/>
</dbReference>
<dbReference type="SUPFAM" id="SSF53335">
    <property type="entry name" value="S-adenosyl-L-methionine-dependent methyltransferases"/>
    <property type="match status" value="1"/>
</dbReference>
<gene>
    <name evidence="5" type="ordered locus">SiRe_1449</name>
</gene>
<name>KMT_SACI5</name>
<organism>
    <name type="scientific">Saccharolobus islandicus (strain REY15A)</name>
    <name type="common">Sulfolobus islandicus</name>
    <dbReference type="NCBI Taxonomy" id="930945"/>
    <lineage>
        <taxon>Archaea</taxon>
        <taxon>Thermoproteota</taxon>
        <taxon>Thermoprotei</taxon>
        <taxon>Sulfolobales</taxon>
        <taxon>Sulfolobaceae</taxon>
        <taxon>Saccharolobus</taxon>
    </lineage>
</organism>
<accession>F0NBH8</accession>
<sequence length="161" mass="18154">MSYVPHVPYVPTPEKVVRRMLEIAKVSQDDIVYDLGCGDGRIIITAAKDFNVKKAVGVEINDERIREALANIEKNGVTGRASIVKGNFFEVDISEATVVTMFLLTNVNEMLKPKLEKELKPGTRVVSHEFEIRGWNPKEVIKVEDGNMNHTVYLYVIGEHK</sequence>
<evidence type="ECO:0000269" key="1">
    <source>
    </source>
</evidence>
<evidence type="ECO:0000303" key="2">
    <source>
    </source>
</evidence>
<evidence type="ECO:0000305" key="3"/>
<evidence type="ECO:0000305" key="4">
    <source>
    </source>
</evidence>
<evidence type="ECO:0000312" key="5">
    <source>
        <dbReference type="EMBL" id="ADX85515.1"/>
    </source>
</evidence>
<evidence type="ECO:0007829" key="6">
    <source>
        <dbReference type="PDB" id="5JWJ"/>
    </source>
</evidence>
<reference key="1">
    <citation type="journal article" date="2011" name="J. Bacteriol.">
        <title>Genome analyses of icelandic strains of Sulfolobus islandicus, model organisms for genetic and virus-host interaction studies.</title>
        <authorList>
            <person name="Guo L."/>
            <person name="Brugger K."/>
            <person name="Liu C."/>
            <person name="Shah S.A."/>
            <person name="Zheng H."/>
            <person name="Zhu Y."/>
            <person name="Wang S."/>
            <person name="Lillestol R.K."/>
            <person name="Chen L."/>
            <person name="Frank J."/>
            <person name="Prangishvili D."/>
            <person name="Paulin L."/>
            <person name="She Q."/>
            <person name="Huang L."/>
            <person name="Garrett R.A."/>
        </authorList>
    </citation>
    <scope>NUCLEOTIDE SEQUENCE [LARGE SCALE GENOMIC DNA]</scope>
    <source>
        <strain>REY15A</strain>
    </source>
</reference>
<reference key="2">
    <citation type="journal article" date="2012" name="J. Bacteriol.">
        <title>Identification and characterization of a highly conserved crenarchaeal protein lysine methyltransferase with broad substrate specificity.</title>
        <authorList>
            <person name="Chu Y."/>
            <person name="Zhang Z."/>
            <person name="Wang Q."/>
            <person name="Luo Y."/>
            <person name="Huang L."/>
        </authorList>
    </citation>
    <scope>IDENTIFICATION</scope>
    <scope>FUNCTION</scope>
    <scope>CATALYTIC ACTIVITY</scope>
    <scope>BIOPHYSICOCHEMICAL PROPERTIES</scope>
    <scope>SUBUNIT</scope>
    <scope>INDUCTION</scope>
    <scope>MUTAGENESIS OF TYR-9; PRO-11; THR-12; ASP-34 AND GLY-36</scope>
    <source>
        <strain>REY15A</strain>
    </source>
</reference>
<protein>
    <recommendedName>
        <fullName evidence="4">Protein-lysine N-methyltransferase</fullName>
        <ecNumber evidence="1">2.1.1.-</ecNumber>
    </recommendedName>
    <alternativeName>
        <fullName evidence="2">Archaeal protein lysine methyltransferase</fullName>
        <shortName evidence="2">aKMT</shortName>
    </alternativeName>
</protein>
<proteinExistence type="evidence at protein level"/>
<comment type="function">
    <text evidence="1">Catalyzes the methylation of lysine residues in target proteins, using S-adenosyl-L-methionine (SAM) as the methyl donor. Exhibits broad substrate specificity, being able to methylate the crenarchaeal chromatin protein Cren7 primarily at 'Lys-11', 'Lys-16' and 'Lys-31', as well as a number of recombinant Sulfolobus proteins in vitro. Methylates lysine residues in a rather sequence-independent manner.</text>
</comment>
<comment type="catalytic activity">
    <reaction evidence="1">
        <text>L-lysyl-[protein] + S-adenosyl-L-methionine = N(6)-methyl-L-lysyl-[protein] + S-adenosyl-L-homocysteine + H(+)</text>
        <dbReference type="Rhea" id="RHEA:51736"/>
        <dbReference type="Rhea" id="RHEA-COMP:9752"/>
        <dbReference type="Rhea" id="RHEA-COMP:13053"/>
        <dbReference type="ChEBI" id="CHEBI:15378"/>
        <dbReference type="ChEBI" id="CHEBI:29969"/>
        <dbReference type="ChEBI" id="CHEBI:57856"/>
        <dbReference type="ChEBI" id="CHEBI:59789"/>
        <dbReference type="ChEBI" id="CHEBI:61929"/>
    </reaction>
</comment>
<comment type="biophysicochemical properties">
    <temperatureDependence>
        <text evidence="1">Optimum temperature is about 60 degrees Celsius. Is active over a wide temperature range, from 25 to 90 degrees Celsius. Has half-lives of about 30 and 10 minutes at 80 and 90 degrees Celsius, respectively.</text>
    </temperatureDependence>
</comment>
<comment type="subunit">
    <text evidence="1">Monomer.</text>
</comment>
<comment type="induction">
    <text evidence="1">Seems to be expressed at similar protein levels when grown at 75 or 85 degrees Celsius, or in the exponential or the stationary phase.</text>
</comment>
<comment type="similarity">
    <text evidence="3">Belongs to the class I-like SAM-binding methyltransferase superfamily.</text>
</comment>
<keyword id="KW-0002">3D-structure</keyword>
<keyword id="KW-0489">Methyltransferase</keyword>
<keyword id="KW-0949">S-adenosyl-L-methionine</keyword>
<keyword id="KW-0808">Transferase</keyword>